<name>YM106_YEAST</name>
<protein>
    <recommendedName>
        <fullName evidence="1">Uncharacterized protein YMR106W-A</fullName>
    </recommendedName>
</protein>
<accession>P9WEJ3</accession>
<accession>A0AAT9JAW2</accession>
<keyword id="KW-1185">Reference proteome</keyword>
<reference key="1">
    <citation type="journal article" date="1997" name="Nature">
        <title>The nucleotide sequence of Saccharomyces cerevisiae chromosome XIII.</title>
        <authorList>
            <person name="Bowman S."/>
            <person name="Churcher C.M."/>
            <person name="Badcock K."/>
            <person name="Brown D."/>
            <person name="Chillingworth T."/>
            <person name="Connor R."/>
            <person name="Dedman K."/>
            <person name="Devlin K."/>
            <person name="Gentles S."/>
            <person name="Hamlin N."/>
            <person name="Hunt S."/>
            <person name="Jagels K."/>
            <person name="Lye G."/>
            <person name="Moule S."/>
            <person name="Odell C."/>
            <person name="Pearson D."/>
            <person name="Rajandream M.A."/>
            <person name="Rice P."/>
            <person name="Skelton J."/>
            <person name="Walsh S.V."/>
            <person name="Whitehead S."/>
            <person name="Barrell B.G."/>
        </authorList>
    </citation>
    <scope>NUCLEOTIDE SEQUENCE [LARGE SCALE GENOMIC DNA]</scope>
    <source>
        <strain>ATCC 204508 / S288c</strain>
    </source>
</reference>
<reference key="2">
    <citation type="journal article" date="2014" name="G3 (Bethesda)">
        <title>The reference genome sequence of Saccharomyces cerevisiae: Then and now.</title>
        <authorList>
            <person name="Engel S.R."/>
            <person name="Dietrich F.S."/>
            <person name="Fisk D.G."/>
            <person name="Binkley G."/>
            <person name="Balakrishnan R."/>
            <person name="Costanzo M.C."/>
            <person name="Dwight S.S."/>
            <person name="Hitz B.C."/>
            <person name="Karra K."/>
            <person name="Nash R.S."/>
            <person name="Weng S."/>
            <person name="Wong E.D."/>
            <person name="Lloyd P."/>
            <person name="Skrzypek M.S."/>
            <person name="Miyasato S.R."/>
            <person name="Simison M."/>
            <person name="Cherry J.M."/>
        </authorList>
    </citation>
    <scope>GENOME REANNOTATION</scope>
    <source>
        <strain>ATCC 204508 / S288c</strain>
    </source>
</reference>
<reference key="3">
    <citation type="journal article" date="2022" name="Genetics">
        <title>New data and collaborations at the Saccharomyces Genome Database: updated reference genome, alleles, and the Alliance of Genome Resources.</title>
        <authorList>
            <person name="Engel S.R."/>
            <person name="Wong E.D."/>
            <person name="Nash R.S."/>
            <person name="Aleksander S."/>
            <person name="Alexander M."/>
            <person name="Douglass E."/>
            <person name="Karra K."/>
            <person name="Miyasato S.R."/>
            <person name="Simison M."/>
            <person name="Skrzypek M.S."/>
            <person name="Weng S."/>
            <person name="Cherry J.M."/>
        </authorList>
    </citation>
    <scope>GENOME REANNOTATION</scope>
    <source>
        <strain>ATCC 204508 / S288c</strain>
    </source>
</reference>
<reference key="4">
    <citation type="journal article" date="2023" name="PLoS Biol.">
        <title>Biological factors and statistical limitations prevent detection of most noncanonical proteins by mass spectrometry.</title>
        <authorList>
            <person name="Wacholder A."/>
            <person name="Carvunis A.R."/>
        </authorList>
    </citation>
    <scope>IDENTIFICATION BY MASS SPECTROMETRY</scope>
</reference>
<gene>
    <name evidence="2" type="ordered locus">YMR106W-A</name>
</gene>
<feature type="chain" id="PRO_0000461174" description="Uncharacterized protein YMR106W-A">
    <location>
        <begin position="1"/>
        <end position="87"/>
    </location>
</feature>
<proteinExistence type="evidence at protein level"/>
<dbReference type="EMBL" id="BK006946">
    <property type="protein sequence ID" value="DBA54441.1"/>
    <property type="molecule type" value="Genomic_DNA"/>
</dbReference>
<dbReference type="RefSeq" id="NP_001418070.1">
    <property type="nucleotide sequence ID" value="NM_001431141.1"/>
</dbReference>
<dbReference type="GeneID" id="91000624"/>
<dbReference type="SGD" id="S000350097">
    <property type="gene designation" value="YMR106W-A"/>
</dbReference>
<dbReference type="Proteomes" id="UP000002311">
    <property type="component" value="Chromosome XIII"/>
</dbReference>
<sequence>MISMEAINNFIKTAPKHDYLTGGVHHSGNVDVLQLSGNKEDGSLVWNHTFVDVDNNVVAKFEDALEKLESLHRRSSSSTGNEEHANV</sequence>
<organism>
    <name type="scientific">Saccharomyces cerevisiae (strain ATCC 204508 / S288c)</name>
    <name type="common">Baker's yeast</name>
    <dbReference type="NCBI Taxonomy" id="559292"/>
    <lineage>
        <taxon>Eukaryota</taxon>
        <taxon>Fungi</taxon>
        <taxon>Dikarya</taxon>
        <taxon>Ascomycota</taxon>
        <taxon>Saccharomycotina</taxon>
        <taxon>Saccharomycetes</taxon>
        <taxon>Saccharomycetales</taxon>
        <taxon>Saccharomycetaceae</taxon>
        <taxon>Saccharomyces</taxon>
    </lineage>
</organism>
<evidence type="ECO:0000305" key="1"/>
<evidence type="ECO:0000312" key="2">
    <source>
        <dbReference type="SGD" id="S000350097"/>
    </source>
</evidence>